<comment type="function">
    <text evidence="1">Required to coordinate membrane tubulation with reorganization of the actin cytoskeleton during endocytosis. May bind to lipids such as phosphatidylinositol 4,5-bisphosphate and phosphatidylserine and promote membrane invagination and the formation of tubules. Also promotes CDC42-induced actin polymerization by activating the WASL-WASPIP complex, the predominant form of WASL/N-WASP in cells. Actin polymerization may promote the fission of membrane tubules to form endocytic vesicles. Essential for autophagy of intracellular bacterial pathogens (By similarity).</text>
</comment>
<comment type="subunit">
    <text evidence="1 2">Homodimerizes, the dimers can polymerize end-to-end to form filamentous structures. Interacts with GTP-bound CDC42. Interacts with DAAM1, DIAPH1, DIAPH2, DNM1, DNM2 and WASL/N-WASP. Interacts with ATG3. Interacts (via SH3 domain) with ABI1, WASF2, CDC42 and WIPF1.</text>
</comment>
<comment type="subcellular location">
    <subcellularLocation>
        <location evidence="1">Cytoplasm</location>
    </subcellularLocation>
    <subcellularLocation>
        <location evidence="1">Cytoplasm</location>
        <location evidence="1">Cytoskeleton</location>
    </subcellularLocation>
    <subcellularLocation>
        <location evidence="1">Cytoplasm</location>
        <location evidence="1">Cell cortex</location>
    </subcellularLocation>
    <subcellularLocation>
        <location evidence="1">Cytoplasmic vesicle</location>
    </subcellularLocation>
    <subcellularLocation>
        <location evidence="1">Cell membrane</location>
        <topology evidence="1">Peripheral membrane protein</topology>
        <orientation evidence="1">Cytoplasmic side</orientation>
    </subcellularLocation>
</comment>
<comment type="alternative products">
    <event type="alternative splicing"/>
    <isoform>
        <id>Q8K012-1</id>
        <name>1</name>
        <sequence type="displayed"/>
    </isoform>
    <isoform>
        <id>Q8K012-2</id>
        <name>2</name>
        <sequence type="described" ref="VSP_021712 VSP_021713"/>
    </isoform>
</comment>
<comment type="domain">
    <text evidence="1">The F-BAR domain binds the phospholipid membrane with its concave surface. The end-to-end polymerization of dimers of these domains provides a curved surface that fits best membranes with around 600 A diameter, and may drive tubulation (By similarity).</text>
</comment>
<comment type="similarity">
    <text evidence="8">Belongs to the FNBP1 family.</text>
</comment>
<comment type="sequence caution" evidence="8">
    <conflict type="erroneous initiation">
        <sequence resource="EMBL-CDS" id="AAH34510"/>
    </conflict>
</comment>
<feature type="chain" id="PRO_0000261435" description="Formin-binding protein 1-like">
    <location>
        <begin position="1"/>
        <end position="605"/>
    </location>
</feature>
<feature type="domain" description="F-BAR" evidence="4">
    <location>
        <begin position="1"/>
        <end position="263"/>
    </location>
</feature>
<feature type="domain" description="REM-1" evidence="5">
    <location>
        <begin position="397"/>
        <end position="474"/>
    </location>
</feature>
<feature type="domain" description="SH3" evidence="3">
    <location>
        <begin position="538"/>
        <end position="599"/>
    </location>
</feature>
<feature type="region of interest" description="Interaction with CDC42" evidence="1">
    <location>
        <begin position="245"/>
        <end position="535"/>
    </location>
</feature>
<feature type="region of interest" description="Disordered" evidence="6">
    <location>
        <begin position="482"/>
        <end position="538"/>
    </location>
</feature>
<feature type="region of interest" description="Interaction with DNM1" evidence="1">
    <location>
        <begin position="522"/>
        <end position="605"/>
    </location>
</feature>
<feature type="region of interest" description="Interaction with DAAM1, DIAPH1 and DIAPH2" evidence="1">
    <location>
        <begin position="541"/>
        <end position="605"/>
    </location>
</feature>
<feature type="region of interest" description="Interaction with DNM2 and WASL" evidence="1">
    <location>
        <begin position="541"/>
        <end position="597"/>
    </location>
</feature>
<feature type="coiled-coil region" evidence="1">
    <location>
        <begin position="66"/>
        <end position="258"/>
    </location>
</feature>
<feature type="coiled-coil region" evidence="1">
    <location>
        <begin position="392"/>
        <end position="484"/>
    </location>
</feature>
<feature type="compositionally biased region" description="Acidic residues" evidence="6">
    <location>
        <begin position="527"/>
        <end position="536"/>
    </location>
</feature>
<feature type="site" description="Mediates end-to-end attachment of dimers" evidence="1">
    <location>
        <position position="165"/>
    </location>
</feature>
<feature type="modified residue" description="Phosphoserine" evidence="9 10">
    <location>
        <position position="295"/>
    </location>
</feature>
<feature type="modified residue" description="Phosphoserine" evidence="10">
    <location>
        <position position="488"/>
    </location>
</feature>
<feature type="modified residue" description="Phosphoserine" evidence="10">
    <location>
        <position position="501"/>
    </location>
</feature>
<feature type="modified residue" description="Phosphoserine" evidence="10">
    <location>
        <position position="505"/>
    </location>
</feature>
<feature type="splice variant" id="VSP_021712" description="In isoform 2." evidence="7">
    <location>
        <begin position="331"/>
        <end position="389"/>
    </location>
</feature>
<feature type="splice variant" id="VSP_021713" description="In isoform 2." evidence="7">
    <original>S</original>
    <variation>AVTYI</variation>
    <location>
        <position position="605"/>
    </location>
</feature>
<gene>
    <name type="primary">Fnbp1l</name>
    <name type="synonym">Toca1</name>
</gene>
<reference key="1">
    <citation type="journal article" date="2009" name="PLoS Biol.">
        <title>Lineage-specific biology revealed by a finished genome assembly of the mouse.</title>
        <authorList>
            <person name="Church D.M."/>
            <person name="Goodstadt L."/>
            <person name="Hillier L.W."/>
            <person name="Zody M.C."/>
            <person name="Goldstein S."/>
            <person name="She X."/>
            <person name="Bult C.J."/>
            <person name="Agarwala R."/>
            <person name="Cherry J.L."/>
            <person name="DiCuccio M."/>
            <person name="Hlavina W."/>
            <person name="Kapustin Y."/>
            <person name="Meric P."/>
            <person name="Maglott D."/>
            <person name="Birtle Z."/>
            <person name="Marques A.C."/>
            <person name="Graves T."/>
            <person name="Zhou S."/>
            <person name="Teague B."/>
            <person name="Potamousis K."/>
            <person name="Churas C."/>
            <person name="Place M."/>
            <person name="Herschleb J."/>
            <person name="Runnheim R."/>
            <person name="Forrest D."/>
            <person name="Amos-Landgraf J."/>
            <person name="Schwartz D.C."/>
            <person name="Cheng Z."/>
            <person name="Lindblad-Toh K."/>
            <person name="Eichler E.E."/>
            <person name="Ponting C.P."/>
        </authorList>
    </citation>
    <scope>NUCLEOTIDE SEQUENCE [LARGE SCALE GENOMIC DNA]</scope>
    <source>
        <strain>C57BL/6J</strain>
    </source>
</reference>
<reference key="2">
    <citation type="journal article" date="2005" name="Science">
        <title>The transcriptional landscape of the mammalian genome.</title>
        <authorList>
            <person name="Carninci P."/>
            <person name="Kasukawa T."/>
            <person name="Katayama S."/>
            <person name="Gough J."/>
            <person name="Frith M.C."/>
            <person name="Maeda N."/>
            <person name="Oyama R."/>
            <person name="Ravasi T."/>
            <person name="Lenhard B."/>
            <person name="Wells C."/>
            <person name="Kodzius R."/>
            <person name="Shimokawa K."/>
            <person name="Bajic V.B."/>
            <person name="Brenner S.E."/>
            <person name="Batalov S."/>
            <person name="Forrest A.R."/>
            <person name="Zavolan M."/>
            <person name="Davis M.J."/>
            <person name="Wilming L.G."/>
            <person name="Aidinis V."/>
            <person name="Allen J.E."/>
            <person name="Ambesi-Impiombato A."/>
            <person name="Apweiler R."/>
            <person name="Aturaliya R.N."/>
            <person name="Bailey T.L."/>
            <person name="Bansal M."/>
            <person name="Baxter L."/>
            <person name="Beisel K.W."/>
            <person name="Bersano T."/>
            <person name="Bono H."/>
            <person name="Chalk A.M."/>
            <person name="Chiu K.P."/>
            <person name="Choudhary V."/>
            <person name="Christoffels A."/>
            <person name="Clutterbuck D.R."/>
            <person name="Crowe M.L."/>
            <person name="Dalla E."/>
            <person name="Dalrymple B.P."/>
            <person name="de Bono B."/>
            <person name="Della Gatta G."/>
            <person name="di Bernardo D."/>
            <person name="Down T."/>
            <person name="Engstrom P."/>
            <person name="Fagiolini M."/>
            <person name="Faulkner G."/>
            <person name="Fletcher C.F."/>
            <person name="Fukushima T."/>
            <person name="Furuno M."/>
            <person name="Futaki S."/>
            <person name="Gariboldi M."/>
            <person name="Georgii-Hemming P."/>
            <person name="Gingeras T.R."/>
            <person name="Gojobori T."/>
            <person name="Green R.E."/>
            <person name="Gustincich S."/>
            <person name="Harbers M."/>
            <person name="Hayashi Y."/>
            <person name="Hensch T.K."/>
            <person name="Hirokawa N."/>
            <person name="Hill D."/>
            <person name="Huminiecki L."/>
            <person name="Iacono M."/>
            <person name="Ikeo K."/>
            <person name="Iwama A."/>
            <person name="Ishikawa T."/>
            <person name="Jakt M."/>
            <person name="Kanapin A."/>
            <person name="Katoh M."/>
            <person name="Kawasawa Y."/>
            <person name="Kelso J."/>
            <person name="Kitamura H."/>
            <person name="Kitano H."/>
            <person name="Kollias G."/>
            <person name="Krishnan S.P."/>
            <person name="Kruger A."/>
            <person name="Kummerfeld S.K."/>
            <person name="Kurochkin I.V."/>
            <person name="Lareau L.F."/>
            <person name="Lazarevic D."/>
            <person name="Lipovich L."/>
            <person name="Liu J."/>
            <person name="Liuni S."/>
            <person name="McWilliam S."/>
            <person name="Madan Babu M."/>
            <person name="Madera M."/>
            <person name="Marchionni L."/>
            <person name="Matsuda H."/>
            <person name="Matsuzawa S."/>
            <person name="Miki H."/>
            <person name="Mignone F."/>
            <person name="Miyake S."/>
            <person name="Morris K."/>
            <person name="Mottagui-Tabar S."/>
            <person name="Mulder N."/>
            <person name="Nakano N."/>
            <person name="Nakauchi H."/>
            <person name="Ng P."/>
            <person name="Nilsson R."/>
            <person name="Nishiguchi S."/>
            <person name="Nishikawa S."/>
            <person name="Nori F."/>
            <person name="Ohara O."/>
            <person name="Okazaki Y."/>
            <person name="Orlando V."/>
            <person name="Pang K.C."/>
            <person name="Pavan W.J."/>
            <person name="Pavesi G."/>
            <person name="Pesole G."/>
            <person name="Petrovsky N."/>
            <person name="Piazza S."/>
            <person name="Reed J."/>
            <person name="Reid J.F."/>
            <person name="Ring B.Z."/>
            <person name="Ringwald M."/>
            <person name="Rost B."/>
            <person name="Ruan Y."/>
            <person name="Salzberg S.L."/>
            <person name="Sandelin A."/>
            <person name="Schneider C."/>
            <person name="Schoenbach C."/>
            <person name="Sekiguchi K."/>
            <person name="Semple C.A."/>
            <person name="Seno S."/>
            <person name="Sessa L."/>
            <person name="Sheng Y."/>
            <person name="Shibata Y."/>
            <person name="Shimada H."/>
            <person name="Shimada K."/>
            <person name="Silva D."/>
            <person name="Sinclair B."/>
            <person name="Sperling S."/>
            <person name="Stupka E."/>
            <person name="Sugiura K."/>
            <person name="Sultana R."/>
            <person name="Takenaka Y."/>
            <person name="Taki K."/>
            <person name="Tammoja K."/>
            <person name="Tan S.L."/>
            <person name="Tang S."/>
            <person name="Taylor M.S."/>
            <person name="Tegner J."/>
            <person name="Teichmann S.A."/>
            <person name="Ueda H.R."/>
            <person name="van Nimwegen E."/>
            <person name="Verardo R."/>
            <person name="Wei C.L."/>
            <person name="Yagi K."/>
            <person name="Yamanishi H."/>
            <person name="Zabarovsky E."/>
            <person name="Zhu S."/>
            <person name="Zimmer A."/>
            <person name="Hide W."/>
            <person name="Bult C."/>
            <person name="Grimmond S.M."/>
            <person name="Teasdale R.D."/>
            <person name="Liu E.T."/>
            <person name="Brusic V."/>
            <person name="Quackenbush J."/>
            <person name="Wahlestedt C."/>
            <person name="Mattick J.S."/>
            <person name="Hume D.A."/>
            <person name="Kai C."/>
            <person name="Sasaki D."/>
            <person name="Tomaru Y."/>
            <person name="Fukuda S."/>
            <person name="Kanamori-Katayama M."/>
            <person name="Suzuki M."/>
            <person name="Aoki J."/>
            <person name="Arakawa T."/>
            <person name="Iida J."/>
            <person name="Imamura K."/>
            <person name="Itoh M."/>
            <person name="Kato T."/>
            <person name="Kawaji H."/>
            <person name="Kawagashira N."/>
            <person name="Kawashima T."/>
            <person name="Kojima M."/>
            <person name="Kondo S."/>
            <person name="Konno H."/>
            <person name="Nakano K."/>
            <person name="Ninomiya N."/>
            <person name="Nishio T."/>
            <person name="Okada M."/>
            <person name="Plessy C."/>
            <person name="Shibata K."/>
            <person name="Shiraki T."/>
            <person name="Suzuki S."/>
            <person name="Tagami M."/>
            <person name="Waki K."/>
            <person name="Watahiki A."/>
            <person name="Okamura-Oho Y."/>
            <person name="Suzuki H."/>
            <person name="Kawai J."/>
            <person name="Hayashizaki Y."/>
        </authorList>
    </citation>
    <scope>NUCLEOTIDE SEQUENCE [LARGE SCALE MRNA] OF 1-108 (ISOFORMS 1/2)</scope>
    <source>
        <strain>C57BL/6J</strain>
        <tissue>Bone marrow</tissue>
    </source>
</reference>
<reference key="3">
    <citation type="journal article" date="2004" name="Genome Res.">
        <title>The status, quality, and expansion of the NIH full-length cDNA project: the Mammalian Gene Collection (MGC).</title>
        <authorList>
            <consortium name="The MGC Project Team"/>
        </authorList>
    </citation>
    <scope>NUCLEOTIDE SEQUENCE [LARGE SCALE MRNA] OF 132-605 (ISOFORM 2)</scope>
    <source>
        <tissue>Eye</tissue>
    </source>
</reference>
<reference key="4">
    <citation type="journal article" date="2007" name="Proc. Natl. Acad. Sci. U.S.A.">
        <title>Large-scale phosphorylation analysis of mouse liver.</title>
        <authorList>
            <person name="Villen J."/>
            <person name="Beausoleil S.A."/>
            <person name="Gerber S.A."/>
            <person name="Gygi S.P."/>
        </authorList>
    </citation>
    <scope>IDENTIFICATION BY MASS SPECTROMETRY [LARGE SCALE ANALYSIS]</scope>
    <source>
        <tissue>Liver</tissue>
    </source>
</reference>
<reference key="5">
    <citation type="journal article" date="2009" name="Immunity">
        <title>The phagosomal proteome in interferon-gamma-activated macrophages.</title>
        <authorList>
            <person name="Trost M."/>
            <person name="English L."/>
            <person name="Lemieux S."/>
            <person name="Courcelles M."/>
            <person name="Desjardins M."/>
            <person name="Thibault P."/>
        </authorList>
    </citation>
    <scope>PHOSPHORYLATION [LARGE SCALE ANALYSIS] AT SER-295</scope>
    <scope>IDENTIFICATION BY MASS SPECTROMETRY [LARGE SCALE ANALYSIS]</scope>
</reference>
<reference key="6">
    <citation type="journal article" date="2010" name="Cell">
        <title>A tissue-specific atlas of mouse protein phosphorylation and expression.</title>
        <authorList>
            <person name="Huttlin E.L."/>
            <person name="Jedrychowski M.P."/>
            <person name="Elias J.E."/>
            <person name="Goswami T."/>
            <person name="Rad R."/>
            <person name="Beausoleil S.A."/>
            <person name="Villen J."/>
            <person name="Haas W."/>
            <person name="Sowa M.E."/>
            <person name="Gygi S.P."/>
        </authorList>
    </citation>
    <scope>PHOSPHORYLATION [LARGE SCALE ANALYSIS] AT SER-295; SER-488; SER-501 AND SER-505</scope>
    <scope>IDENTIFICATION BY MASS SPECTROMETRY [LARGE SCALE ANALYSIS]</scope>
    <source>
        <tissue>Brain</tissue>
        <tissue>Brown adipose tissue</tissue>
        <tissue>Heart</tissue>
        <tissue>Kidney</tissue>
        <tissue>Liver</tissue>
        <tissue>Lung</tissue>
        <tissue>Spleen</tissue>
    </source>
</reference>
<keyword id="KW-0025">Alternative splicing</keyword>
<keyword id="KW-0072">Autophagy</keyword>
<keyword id="KW-1003">Cell membrane</keyword>
<keyword id="KW-0175">Coiled coil</keyword>
<keyword id="KW-0963">Cytoplasm</keyword>
<keyword id="KW-0968">Cytoplasmic vesicle</keyword>
<keyword id="KW-0206">Cytoskeleton</keyword>
<keyword id="KW-0254">Endocytosis</keyword>
<keyword id="KW-0446">Lipid-binding</keyword>
<keyword id="KW-0472">Membrane</keyword>
<keyword id="KW-0597">Phosphoprotein</keyword>
<keyword id="KW-1185">Reference proteome</keyword>
<keyword id="KW-0728">SH3 domain</keyword>
<name>FBP1L_MOUSE</name>
<proteinExistence type="evidence at protein level"/>
<accession>Q8K012</accession>
<accession>Q3U901</accession>
<protein>
    <recommendedName>
        <fullName>Formin-binding protein 1-like</fullName>
    </recommendedName>
    <alternativeName>
        <fullName>Transducer of Cdc42-dependent actin assembly protein 1</fullName>
        <shortName>Toca-1</shortName>
    </alternativeName>
</protein>
<organism>
    <name type="scientific">Mus musculus</name>
    <name type="common">Mouse</name>
    <dbReference type="NCBI Taxonomy" id="10090"/>
    <lineage>
        <taxon>Eukaryota</taxon>
        <taxon>Metazoa</taxon>
        <taxon>Chordata</taxon>
        <taxon>Craniata</taxon>
        <taxon>Vertebrata</taxon>
        <taxon>Euteleostomi</taxon>
        <taxon>Mammalia</taxon>
        <taxon>Eutheria</taxon>
        <taxon>Euarchontoglires</taxon>
        <taxon>Glires</taxon>
        <taxon>Rodentia</taxon>
        <taxon>Myomorpha</taxon>
        <taxon>Muroidea</taxon>
        <taxon>Muridae</taxon>
        <taxon>Murinae</taxon>
        <taxon>Mus</taxon>
        <taxon>Mus</taxon>
    </lineage>
</organism>
<sequence>MSWGTELWDQFDSLDKHTQWGIDFLERYAKFVKERIEIEQNYAKQLRNLVKKYCPKRSSKDEEPRFTSCIAFFNILNELNDYAGQREVVAEEMAHRVYGELMRYAHDLKTERKMHLQEGRKAQQYLDMCWKQMDNSKKKFERECREAEKAQQSYERLDNDTNATKADVEKAKQQLNLRTHMADENKNEYAAQLQNFNGEQHKHFYVVIPQIYKQLQEMDERRTIKLSECYRGFADSERKVIPIISKCLEGMILAAKSVDERRDSQMVVDSFKSGFEPPGDFPFEDYSQHIYRTISDGTISAAKQESGKMDSKSTVGKAKGKLWLFGKKPKPQSPPLTPTSLFTSSTPNGSQFLTLSIEPVHYCMNEIKTGKPRIPSFRSLKRGVSLIMGPALEDFSHLPPEQRRKKLQQRIDELNRGLQKEADQKEALNKMKDVYEKNPQMGDPGSLQPKLAETMNNIDRLRMEIHKNEAWLSEVEGKTGIRGDRRHSSDINHLVTQGRESPEGSYTDDANQEVRGPPQQHGHHSEFDDEFEDDDPLPAIGHCKAIYPFDGHNEGTLAMKEGEVLYIIEEDKGDGWTRARRQNGEEGYVPTTYIDVTLEKSSKGS</sequence>
<dbReference type="EMBL" id="AC099584">
    <property type="status" value="NOT_ANNOTATED_CDS"/>
    <property type="molecule type" value="Genomic_DNA"/>
</dbReference>
<dbReference type="EMBL" id="AC138720">
    <property type="status" value="NOT_ANNOTATED_CDS"/>
    <property type="molecule type" value="Genomic_DNA"/>
</dbReference>
<dbReference type="EMBL" id="AK151930">
    <property type="protein sequence ID" value="BAE30806.1"/>
    <property type="molecule type" value="mRNA"/>
</dbReference>
<dbReference type="EMBL" id="AK152002">
    <property type="protein sequence ID" value="BAE30866.1"/>
    <property type="molecule type" value="mRNA"/>
</dbReference>
<dbReference type="EMBL" id="BC034510">
    <property type="protein sequence ID" value="AAH34510.1"/>
    <property type="status" value="ALT_INIT"/>
    <property type="molecule type" value="mRNA"/>
</dbReference>
<dbReference type="SMR" id="Q8K012"/>
<dbReference type="FunCoup" id="Q8K012">
    <property type="interactions" value="2273"/>
</dbReference>
<dbReference type="STRING" id="10090.ENSMUSP00000124947"/>
<dbReference type="iPTMnet" id="Q8K012"/>
<dbReference type="PhosphoSitePlus" id="Q8K012"/>
<dbReference type="jPOST" id="Q8K012"/>
<dbReference type="PaxDb" id="10090-ENSMUSP00000124947"/>
<dbReference type="PeptideAtlas" id="Q8K012"/>
<dbReference type="ProteomicsDB" id="270957">
    <molecule id="Q8K012-1"/>
</dbReference>
<dbReference type="ProteomicsDB" id="270958">
    <molecule id="Q8K012-2"/>
</dbReference>
<dbReference type="Pumba" id="Q8K012"/>
<dbReference type="DNASU" id="214459"/>
<dbReference type="AGR" id="MGI:1925642"/>
<dbReference type="MGI" id="MGI:1925642">
    <property type="gene designation" value="Fnbp1l"/>
</dbReference>
<dbReference type="eggNOG" id="KOG3565">
    <property type="taxonomic scope" value="Eukaryota"/>
</dbReference>
<dbReference type="InParanoid" id="Q8K012"/>
<dbReference type="PhylomeDB" id="Q8K012"/>
<dbReference type="Reactome" id="R-MMU-8856828">
    <property type="pathway name" value="Clathrin-mediated endocytosis"/>
</dbReference>
<dbReference type="CD-CODE" id="CE726F99">
    <property type="entry name" value="Postsynaptic density"/>
</dbReference>
<dbReference type="ChiTaRS" id="Fnbp1l">
    <property type="organism name" value="mouse"/>
</dbReference>
<dbReference type="PRO" id="PR:Q8K012"/>
<dbReference type="Proteomes" id="UP000000589">
    <property type="component" value="Unplaced"/>
</dbReference>
<dbReference type="RNAct" id="Q8K012">
    <property type="molecule type" value="protein"/>
</dbReference>
<dbReference type="GO" id="GO:0005938">
    <property type="term" value="C:cell cortex"/>
    <property type="evidence" value="ECO:0007669"/>
    <property type="project" value="UniProtKB-SubCell"/>
</dbReference>
<dbReference type="GO" id="GO:0005737">
    <property type="term" value="C:cytoplasm"/>
    <property type="evidence" value="ECO:0000266"/>
    <property type="project" value="MGI"/>
</dbReference>
<dbReference type="GO" id="GO:0031410">
    <property type="term" value="C:cytoplasmic vesicle"/>
    <property type="evidence" value="ECO:0007669"/>
    <property type="project" value="UniProtKB-KW"/>
</dbReference>
<dbReference type="GO" id="GO:0005856">
    <property type="term" value="C:cytoskeleton"/>
    <property type="evidence" value="ECO:0007669"/>
    <property type="project" value="UniProtKB-SubCell"/>
</dbReference>
<dbReference type="GO" id="GO:0005886">
    <property type="term" value="C:plasma membrane"/>
    <property type="evidence" value="ECO:0007669"/>
    <property type="project" value="UniProtKB-SubCell"/>
</dbReference>
<dbReference type="GO" id="GO:0008289">
    <property type="term" value="F:lipid binding"/>
    <property type="evidence" value="ECO:0007669"/>
    <property type="project" value="UniProtKB-KW"/>
</dbReference>
<dbReference type="GO" id="GO:0006914">
    <property type="term" value="P:autophagy"/>
    <property type="evidence" value="ECO:0007669"/>
    <property type="project" value="UniProtKB-KW"/>
</dbReference>
<dbReference type="GO" id="GO:0060271">
    <property type="term" value="P:cilium assembly"/>
    <property type="evidence" value="ECO:0000266"/>
    <property type="project" value="MGI"/>
</dbReference>
<dbReference type="GO" id="GO:0006897">
    <property type="term" value="P:endocytosis"/>
    <property type="evidence" value="ECO:0007669"/>
    <property type="project" value="UniProtKB-KW"/>
</dbReference>
<dbReference type="GO" id="GO:0007165">
    <property type="term" value="P:signal transduction"/>
    <property type="evidence" value="ECO:0007669"/>
    <property type="project" value="InterPro"/>
</dbReference>
<dbReference type="CDD" id="cd07675">
    <property type="entry name" value="F-BAR_FNBP1L"/>
    <property type="match status" value="1"/>
</dbReference>
<dbReference type="CDD" id="cd11628">
    <property type="entry name" value="HR1_CIP4_FNBP1L"/>
    <property type="match status" value="1"/>
</dbReference>
<dbReference type="CDD" id="cd12072">
    <property type="entry name" value="SH3_FNBP1L"/>
    <property type="match status" value="1"/>
</dbReference>
<dbReference type="FunFam" id="1.20.1270.60:FF:000002">
    <property type="entry name" value="Formin-binding protein 1-like isoform 1"/>
    <property type="match status" value="1"/>
</dbReference>
<dbReference type="FunFam" id="2.30.30.40:FF:000017">
    <property type="entry name" value="Formin-binding protein 1-like isoform 1"/>
    <property type="match status" value="1"/>
</dbReference>
<dbReference type="Gene3D" id="6.10.140.470">
    <property type="match status" value="1"/>
</dbReference>
<dbReference type="Gene3D" id="1.20.1270.60">
    <property type="entry name" value="Arfaptin homology (AH) domain/BAR domain"/>
    <property type="match status" value="1"/>
</dbReference>
<dbReference type="Gene3D" id="2.30.30.40">
    <property type="entry name" value="SH3 Domains"/>
    <property type="match status" value="1"/>
</dbReference>
<dbReference type="InterPro" id="IPR027267">
    <property type="entry name" value="AH/BAR_dom_sf"/>
</dbReference>
<dbReference type="InterPro" id="IPR031160">
    <property type="entry name" value="F_BAR"/>
</dbReference>
<dbReference type="InterPro" id="IPR001060">
    <property type="entry name" value="FCH_dom"/>
</dbReference>
<dbReference type="InterPro" id="IPR035494">
    <property type="entry name" value="FNBP1L_F-BAR"/>
</dbReference>
<dbReference type="InterPro" id="IPR035493">
    <property type="entry name" value="FNBP1L_SH3"/>
</dbReference>
<dbReference type="InterPro" id="IPR011072">
    <property type="entry name" value="HR1_rho-bd"/>
</dbReference>
<dbReference type="InterPro" id="IPR036028">
    <property type="entry name" value="SH3-like_dom_sf"/>
</dbReference>
<dbReference type="InterPro" id="IPR001452">
    <property type="entry name" value="SH3_domain"/>
</dbReference>
<dbReference type="PANTHER" id="PTHR15735">
    <property type="entry name" value="FCH AND DOUBLE SH3 DOMAINS PROTEIN"/>
    <property type="match status" value="1"/>
</dbReference>
<dbReference type="PANTHER" id="PTHR15735:SF14">
    <property type="entry name" value="FORMIN-BINDING PROTEIN 1-LIKE"/>
    <property type="match status" value="1"/>
</dbReference>
<dbReference type="Pfam" id="PF00611">
    <property type="entry name" value="FCH"/>
    <property type="match status" value="1"/>
</dbReference>
<dbReference type="Pfam" id="PF00018">
    <property type="entry name" value="SH3_1"/>
    <property type="match status" value="1"/>
</dbReference>
<dbReference type="SMART" id="SM00055">
    <property type="entry name" value="FCH"/>
    <property type="match status" value="1"/>
</dbReference>
<dbReference type="SMART" id="SM00326">
    <property type="entry name" value="SH3"/>
    <property type="match status" value="1"/>
</dbReference>
<dbReference type="SUPFAM" id="SSF103657">
    <property type="entry name" value="BAR/IMD domain-like"/>
    <property type="match status" value="1"/>
</dbReference>
<dbReference type="SUPFAM" id="SSF50044">
    <property type="entry name" value="SH3-domain"/>
    <property type="match status" value="1"/>
</dbReference>
<dbReference type="PROSITE" id="PS51741">
    <property type="entry name" value="F_BAR"/>
    <property type="match status" value="1"/>
</dbReference>
<dbReference type="PROSITE" id="PS51860">
    <property type="entry name" value="REM_1"/>
    <property type="match status" value="1"/>
</dbReference>
<dbReference type="PROSITE" id="PS50002">
    <property type="entry name" value="SH3"/>
    <property type="match status" value="1"/>
</dbReference>
<evidence type="ECO:0000250" key="1"/>
<evidence type="ECO:0000250" key="2">
    <source>
        <dbReference type="UniProtKB" id="Q5T0N5"/>
    </source>
</evidence>
<evidence type="ECO:0000255" key="3">
    <source>
        <dbReference type="PROSITE-ProRule" id="PRU00192"/>
    </source>
</evidence>
<evidence type="ECO:0000255" key="4">
    <source>
        <dbReference type="PROSITE-ProRule" id="PRU01077"/>
    </source>
</evidence>
<evidence type="ECO:0000255" key="5">
    <source>
        <dbReference type="PROSITE-ProRule" id="PRU01207"/>
    </source>
</evidence>
<evidence type="ECO:0000256" key="6">
    <source>
        <dbReference type="SAM" id="MobiDB-lite"/>
    </source>
</evidence>
<evidence type="ECO:0000303" key="7">
    <source>
    </source>
</evidence>
<evidence type="ECO:0000305" key="8"/>
<evidence type="ECO:0007744" key="9">
    <source>
    </source>
</evidence>
<evidence type="ECO:0007744" key="10">
    <source>
    </source>
</evidence>